<evidence type="ECO:0000255" key="1">
    <source>
        <dbReference type="HAMAP-Rule" id="MF_00091"/>
    </source>
</evidence>
<keyword id="KW-0071">Autoinducer synthesis</keyword>
<keyword id="KW-0408">Iron</keyword>
<keyword id="KW-0456">Lyase</keyword>
<keyword id="KW-0479">Metal-binding</keyword>
<keyword id="KW-0673">Quorum sensing</keyword>
<organism>
    <name type="scientific">Actinobacillus pleuropneumoniae serotype 3 (strain JL03)</name>
    <dbReference type="NCBI Taxonomy" id="434271"/>
    <lineage>
        <taxon>Bacteria</taxon>
        <taxon>Pseudomonadati</taxon>
        <taxon>Pseudomonadota</taxon>
        <taxon>Gammaproteobacteria</taxon>
        <taxon>Pasteurellales</taxon>
        <taxon>Pasteurellaceae</taxon>
        <taxon>Actinobacillus</taxon>
    </lineage>
</organism>
<comment type="function">
    <text evidence="1">Involved in the synthesis of autoinducer 2 (AI-2) which is secreted by bacteria and is used to communicate both the cell density and the metabolic potential of the environment. The regulation of gene expression in response to changes in cell density is called quorum sensing. Catalyzes the transformation of S-ribosylhomocysteine (RHC) to homocysteine (HC) and 4,5-dihydroxy-2,3-pentadione (DPD).</text>
</comment>
<comment type="catalytic activity">
    <reaction evidence="1">
        <text>S-(5-deoxy-D-ribos-5-yl)-L-homocysteine = (S)-4,5-dihydroxypentane-2,3-dione + L-homocysteine</text>
        <dbReference type="Rhea" id="RHEA:17753"/>
        <dbReference type="ChEBI" id="CHEBI:29484"/>
        <dbReference type="ChEBI" id="CHEBI:58195"/>
        <dbReference type="ChEBI" id="CHEBI:58199"/>
        <dbReference type="EC" id="4.4.1.21"/>
    </reaction>
</comment>
<comment type="cofactor">
    <cofactor evidence="1">
        <name>Fe cation</name>
        <dbReference type="ChEBI" id="CHEBI:24875"/>
    </cofactor>
    <text evidence="1">Binds 1 Fe cation per subunit.</text>
</comment>
<comment type="subunit">
    <text evidence="1">Homodimer.</text>
</comment>
<comment type="similarity">
    <text evidence="1">Belongs to the LuxS family.</text>
</comment>
<accession>B0BQF0</accession>
<sequence>MPLLDSFKVDHTRMNAPAVRVAKTMTTPKGDTITVFDLRFCRPNIDILPVRGIHTMEHLFAGFMRDHLNSESVEIIDISPMGCRTGFYMSLIGAPSEADVVSAWTKSMEDALNKVPDVSKIPELNEYQCGSYKEHSLEEAHQIARDVLAKGIGVNRNEDLALDEKLLNP</sequence>
<proteinExistence type="inferred from homology"/>
<gene>
    <name evidence="1" type="primary">luxS</name>
    <name type="ordered locus">APJL_1229</name>
</gene>
<reference key="1">
    <citation type="journal article" date="2008" name="PLoS ONE">
        <title>Genome biology of Actinobacillus pleuropneumoniae JL03, an isolate of serotype 3 prevalent in China.</title>
        <authorList>
            <person name="Xu Z."/>
            <person name="Zhou Y."/>
            <person name="Li L."/>
            <person name="Zhou R."/>
            <person name="Xiao S."/>
            <person name="Wan Y."/>
            <person name="Zhang S."/>
            <person name="Wang K."/>
            <person name="Li W."/>
            <person name="Li L."/>
            <person name="Jin H."/>
            <person name="Kang M."/>
            <person name="Dalai B."/>
            <person name="Li T."/>
            <person name="Liu L."/>
            <person name="Cheng Y."/>
            <person name="Zhang L."/>
            <person name="Xu T."/>
            <person name="Zheng H."/>
            <person name="Pu S."/>
            <person name="Wang B."/>
            <person name="Gu W."/>
            <person name="Zhang X.L."/>
            <person name="Zhu G.-F."/>
            <person name="Wang S."/>
            <person name="Zhao G.-P."/>
            <person name="Chen H."/>
        </authorList>
    </citation>
    <scope>NUCLEOTIDE SEQUENCE [LARGE SCALE GENOMIC DNA]</scope>
    <source>
        <strain>JL03</strain>
    </source>
</reference>
<name>LUXS_ACTPJ</name>
<dbReference type="EC" id="4.4.1.21" evidence="1"/>
<dbReference type="EMBL" id="CP000687">
    <property type="protein sequence ID" value="ABY69785.1"/>
    <property type="molecule type" value="Genomic_DNA"/>
</dbReference>
<dbReference type="RefSeq" id="WP_005598178.1">
    <property type="nucleotide sequence ID" value="NC_010278.1"/>
</dbReference>
<dbReference type="SMR" id="B0BQF0"/>
<dbReference type="GeneID" id="48599454"/>
<dbReference type="KEGG" id="apj:APJL_1229"/>
<dbReference type="HOGENOM" id="CLU_107531_2_0_6"/>
<dbReference type="Proteomes" id="UP000008547">
    <property type="component" value="Chromosome"/>
</dbReference>
<dbReference type="GO" id="GO:0005506">
    <property type="term" value="F:iron ion binding"/>
    <property type="evidence" value="ECO:0007669"/>
    <property type="project" value="InterPro"/>
</dbReference>
<dbReference type="GO" id="GO:0043768">
    <property type="term" value="F:S-ribosylhomocysteine lyase activity"/>
    <property type="evidence" value="ECO:0007669"/>
    <property type="project" value="UniProtKB-UniRule"/>
</dbReference>
<dbReference type="GO" id="GO:0009372">
    <property type="term" value="P:quorum sensing"/>
    <property type="evidence" value="ECO:0007669"/>
    <property type="project" value="UniProtKB-UniRule"/>
</dbReference>
<dbReference type="Gene3D" id="3.30.1360.80">
    <property type="entry name" value="S-ribosylhomocysteinase (LuxS)"/>
    <property type="match status" value="1"/>
</dbReference>
<dbReference type="HAMAP" id="MF_00091">
    <property type="entry name" value="LuxS"/>
    <property type="match status" value="1"/>
</dbReference>
<dbReference type="InterPro" id="IPR037005">
    <property type="entry name" value="LuxS_sf"/>
</dbReference>
<dbReference type="InterPro" id="IPR011249">
    <property type="entry name" value="Metalloenz_LuxS/M16"/>
</dbReference>
<dbReference type="InterPro" id="IPR003815">
    <property type="entry name" value="S-ribosylhomocysteinase"/>
</dbReference>
<dbReference type="NCBIfam" id="NF002602">
    <property type="entry name" value="PRK02260.1-2"/>
    <property type="match status" value="1"/>
</dbReference>
<dbReference type="PANTHER" id="PTHR35799">
    <property type="entry name" value="S-RIBOSYLHOMOCYSTEINE LYASE"/>
    <property type="match status" value="1"/>
</dbReference>
<dbReference type="PANTHER" id="PTHR35799:SF1">
    <property type="entry name" value="S-RIBOSYLHOMOCYSTEINE LYASE"/>
    <property type="match status" value="1"/>
</dbReference>
<dbReference type="Pfam" id="PF02664">
    <property type="entry name" value="LuxS"/>
    <property type="match status" value="1"/>
</dbReference>
<dbReference type="PIRSF" id="PIRSF006160">
    <property type="entry name" value="AI2"/>
    <property type="match status" value="1"/>
</dbReference>
<dbReference type="PRINTS" id="PR01487">
    <property type="entry name" value="LUXSPROTEIN"/>
</dbReference>
<dbReference type="SUPFAM" id="SSF63411">
    <property type="entry name" value="LuxS/MPP-like metallohydrolase"/>
    <property type="match status" value="1"/>
</dbReference>
<protein>
    <recommendedName>
        <fullName evidence="1">S-ribosylhomocysteine lyase</fullName>
        <ecNumber evidence="1">4.4.1.21</ecNumber>
    </recommendedName>
    <alternativeName>
        <fullName evidence="1">AI-2 synthesis protein</fullName>
    </alternativeName>
    <alternativeName>
        <fullName evidence="1">Autoinducer-2 production protein LuxS</fullName>
    </alternativeName>
</protein>
<feature type="chain" id="PRO_1000093299" description="S-ribosylhomocysteine lyase">
    <location>
        <begin position="1"/>
        <end position="169"/>
    </location>
</feature>
<feature type="binding site" evidence="1">
    <location>
        <position position="54"/>
    </location>
    <ligand>
        <name>Fe cation</name>
        <dbReference type="ChEBI" id="CHEBI:24875"/>
    </ligand>
</feature>
<feature type="binding site" evidence="1">
    <location>
        <position position="58"/>
    </location>
    <ligand>
        <name>Fe cation</name>
        <dbReference type="ChEBI" id="CHEBI:24875"/>
    </ligand>
</feature>
<feature type="binding site" evidence="1">
    <location>
        <position position="129"/>
    </location>
    <ligand>
        <name>Fe cation</name>
        <dbReference type="ChEBI" id="CHEBI:24875"/>
    </ligand>
</feature>